<proteinExistence type="inferred from homology"/>
<feature type="chain" id="PRO_0000260698" description="1,4-alpha-glucan branching enzyme GlgB">
    <location>
        <begin position="1"/>
        <end position="744"/>
    </location>
</feature>
<feature type="active site" description="Nucleophile" evidence="1">
    <location>
        <position position="415"/>
    </location>
</feature>
<feature type="active site" description="Proton donor" evidence="1">
    <location>
        <position position="468"/>
    </location>
</feature>
<name>GLGB_SHEFN</name>
<reference key="1">
    <citation type="submission" date="2006-08" db="EMBL/GenBank/DDBJ databases">
        <title>Complete sequence of Shewanella frigidimarina NCIMB 400.</title>
        <authorList>
            <consortium name="US DOE Joint Genome Institute"/>
            <person name="Copeland A."/>
            <person name="Lucas S."/>
            <person name="Lapidus A."/>
            <person name="Barry K."/>
            <person name="Detter J.C."/>
            <person name="Glavina del Rio T."/>
            <person name="Hammon N."/>
            <person name="Israni S."/>
            <person name="Dalin E."/>
            <person name="Tice H."/>
            <person name="Pitluck S."/>
            <person name="Fredrickson J.K."/>
            <person name="Kolker E."/>
            <person name="McCuel L.A."/>
            <person name="DiChristina T."/>
            <person name="Nealson K.H."/>
            <person name="Newman D."/>
            <person name="Tiedje J.M."/>
            <person name="Zhou J."/>
            <person name="Romine M.F."/>
            <person name="Culley D.E."/>
            <person name="Serres M."/>
            <person name="Chertkov O."/>
            <person name="Brettin T."/>
            <person name="Bruce D."/>
            <person name="Han C."/>
            <person name="Tapia R."/>
            <person name="Gilna P."/>
            <person name="Schmutz J."/>
            <person name="Larimer F."/>
            <person name="Land M."/>
            <person name="Hauser L."/>
            <person name="Kyrpides N."/>
            <person name="Mikhailova N."/>
            <person name="Richardson P."/>
        </authorList>
    </citation>
    <scope>NUCLEOTIDE SEQUENCE [LARGE SCALE GENOMIC DNA]</scope>
    <source>
        <strain>NCIMB 400</strain>
    </source>
</reference>
<sequence>MTVATPYFQQGSEIALLNGEYTDVFSLLGMHSVNDGKALVVRCLIPGAISVDVLSAKDGRKVATLEQVNEHGLFAGKMGRRVKSFAYLLRVQYPLCEQLINDPYQFDSLLNPDDVYLFGEGSQLQTYHFQGANWREHHGVKGVHFCVWAPNAKQVAVMGDFNLWDNKRHILRHHPASGLWDIFIAEVEPEQHYKYAISDMHGNQVIKSDPYAVAMQPSPHNASKIPHVERYDWQDSQWLADRASHQPHVQPMSIYEVQLASWRRKGDDSQEYTDYSQLIAELVPYIKEMGFTHLQLMPISEYPFDGSWGYQPVGLFAPTYRFGDANGLRAFIDECHQQGIAVLLDWVPAHFPRDPHGLVRFDGSCLYEHDDPRKGEQPDWDTLIYNYGRAEVRSFLYSNAHYWLDEFHFDGLRLDAVSSMLYLDYSRRADQWIPNKFGGRENLEAISFLQELNARMYQCFPGINMIAEESTAWPGVTQATSNNGLGFGFKWNMGWMNDTLRYISCDPLFRRYHHGELTFSLVYAFTEQFILSLSHDEVVHGKGSLLHKIPGDDWQKFATLRAYYGFMWTHPGKKLLFMGNEFAQRNEWNHNQSLDWHLLTYAPHQGVQDWVRDLNQCYQQYPALYQRDHHSDGFQWLDCNNADNNILVFCRFGMDKQQHVVIVVNMSPQVYYDFRVGVPTAQNYRELLNSDHRHYGGGDVVNDNPCEAQVTPWQGMSHSIVITVPPLGCSIWVPELDEQDQPTQ</sequence>
<accession>Q081Q4</accession>
<organism>
    <name type="scientific">Shewanella frigidimarina (strain NCIMB 400)</name>
    <dbReference type="NCBI Taxonomy" id="318167"/>
    <lineage>
        <taxon>Bacteria</taxon>
        <taxon>Pseudomonadati</taxon>
        <taxon>Pseudomonadota</taxon>
        <taxon>Gammaproteobacteria</taxon>
        <taxon>Alteromonadales</taxon>
        <taxon>Shewanellaceae</taxon>
        <taxon>Shewanella</taxon>
    </lineage>
</organism>
<protein>
    <recommendedName>
        <fullName evidence="1">1,4-alpha-glucan branching enzyme GlgB</fullName>
        <ecNumber evidence="1">2.4.1.18</ecNumber>
    </recommendedName>
    <alternativeName>
        <fullName evidence="1">1,4-alpha-D-glucan:1,4-alpha-D-glucan 6-glucosyl-transferase</fullName>
    </alternativeName>
    <alternativeName>
        <fullName evidence="1">Alpha-(1-&gt;4)-glucan branching enzyme</fullName>
    </alternativeName>
    <alternativeName>
        <fullName evidence="1">Glycogen branching enzyme</fullName>
        <shortName evidence="1">BE</shortName>
    </alternativeName>
</protein>
<dbReference type="EC" id="2.4.1.18" evidence="1"/>
<dbReference type="EMBL" id="CP000447">
    <property type="protein sequence ID" value="ABI72011.1"/>
    <property type="molecule type" value="Genomic_DNA"/>
</dbReference>
<dbReference type="RefSeq" id="WP_011637621.1">
    <property type="nucleotide sequence ID" value="NC_008345.1"/>
</dbReference>
<dbReference type="SMR" id="Q081Q4"/>
<dbReference type="STRING" id="318167.Sfri_2165"/>
<dbReference type="CAZy" id="CBM48">
    <property type="family name" value="Carbohydrate-Binding Module Family 48"/>
</dbReference>
<dbReference type="CAZy" id="GH13">
    <property type="family name" value="Glycoside Hydrolase Family 13"/>
</dbReference>
<dbReference type="KEGG" id="sfr:Sfri_2165"/>
<dbReference type="eggNOG" id="COG0296">
    <property type="taxonomic scope" value="Bacteria"/>
</dbReference>
<dbReference type="HOGENOM" id="CLU_004245_3_2_6"/>
<dbReference type="OrthoDB" id="9800174at2"/>
<dbReference type="UniPathway" id="UPA00164"/>
<dbReference type="Proteomes" id="UP000000684">
    <property type="component" value="Chromosome"/>
</dbReference>
<dbReference type="GO" id="GO:0005829">
    <property type="term" value="C:cytosol"/>
    <property type="evidence" value="ECO:0007669"/>
    <property type="project" value="TreeGrafter"/>
</dbReference>
<dbReference type="GO" id="GO:0003844">
    <property type="term" value="F:1,4-alpha-glucan branching enzyme activity"/>
    <property type="evidence" value="ECO:0007669"/>
    <property type="project" value="UniProtKB-UniRule"/>
</dbReference>
<dbReference type="GO" id="GO:0043169">
    <property type="term" value="F:cation binding"/>
    <property type="evidence" value="ECO:0007669"/>
    <property type="project" value="InterPro"/>
</dbReference>
<dbReference type="GO" id="GO:0004553">
    <property type="term" value="F:hydrolase activity, hydrolyzing O-glycosyl compounds"/>
    <property type="evidence" value="ECO:0007669"/>
    <property type="project" value="InterPro"/>
</dbReference>
<dbReference type="GO" id="GO:0005978">
    <property type="term" value="P:glycogen biosynthetic process"/>
    <property type="evidence" value="ECO:0007669"/>
    <property type="project" value="UniProtKB-UniRule"/>
</dbReference>
<dbReference type="CDD" id="cd11322">
    <property type="entry name" value="AmyAc_Glg_BE"/>
    <property type="match status" value="1"/>
</dbReference>
<dbReference type="CDD" id="cd02855">
    <property type="entry name" value="E_set_GBE_prok_N"/>
    <property type="match status" value="1"/>
</dbReference>
<dbReference type="FunFam" id="2.60.40.1180:FF:000002">
    <property type="entry name" value="1,4-alpha-glucan branching enzyme GlgB"/>
    <property type="match status" value="1"/>
</dbReference>
<dbReference type="FunFam" id="3.20.20.80:FF:000003">
    <property type="entry name" value="1,4-alpha-glucan branching enzyme GlgB"/>
    <property type="match status" value="1"/>
</dbReference>
<dbReference type="Gene3D" id="3.20.20.80">
    <property type="entry name" value="Glycosidases"/>
    <property type="match status" value="1"/>
</dbReference>
<dbReference type="Gene3D" id="2.60.40.1180">
    <property type="entry name" value="Golgi alpha-mannosidase II"/>
    <property type="match status" value="1"/>
</dbReference>
<dbReference type="Gene3D" id="2.60.40.10">
    <property type="entry name" value="Immunoglobulins"/>
    <property type="match status" value="1"/>
</dbReference>
<dbReference type="HAMAP" id="MF_00685">
    <property type="entry name" value="GlgB"/>
    <property type="match status" value="1"/>
</dbReference>
<dbReference type="InterPro" id="IPR006048">
    <property type="entry name" value="A-amylase/branching_C"/>
</dbReference>
<dbReference type="InterPro" id="IPR037439">
    <property type="entry name" value="Branching_enzy"/>
</dbReference>
<dbReference type="InterPro" id="IPR006407">
    <property type="entry name" value="GlgB"/>
</dbReference>
<dbReference type="InterPro" id="IPR054169">
    <property type="entry name" value="GlgB_N"/>
</dbReference>
<dbReference type="InterPro" id="IPR044143">
    <property type="entry name" value="GlgB_N_E_set_prok"/>
</dbReference>
<dbReference type="InterPro" id="IPR006047">
    <property type="entry name" value="Glyco_hydro_13_cat_dom"/>
</dbReference>
<dbReference type="InterPro" id="IPR004193">
    <property type="entry name" value="Glyco_hydro_13_N"/>
</dbReference>
<dbReference type="InterPro" id="IPR013780">
    <property type="entry name" value="Glyco_hydro_b"/>
</dbReference>
<dbReference type="InterPro" id="IPR017853">
    <property type="entry name" value="Glycoside_hydrolase_SF"/>
</dbReference>
<dbReference type="InterPro" id="IPR013783">
    <property type="entry name" value="Ig-like_fold"/>
</dbReference>
<dbReference type="InterPro" id="IPR014756">
    <property type="entry name" value="Ig_E-set"/>
</dbReference>
<dbReference type="NCBIfam" id="TIGR01515">
    <property type="entry name" value="branching_enzym"/>
    <property type="match status" value="1"/>
</dbReference>
<dbReference type="NCBIfam" id="NF003811">
    <property type="entry name" value="PRK05402.1"/>
    <property type="match status" value="1"/>
</dbReference>
<dbReference type="NCBIfam" id="NF008967">
    <property type="entry name" value="PRK12313.1"/>
    <property type="match status" value="1"/>
</dbReference>
<dbReference type="PANTHER" id="PTHR43651">
    <property type="entry name" value="1,4-ALPHA-GLUCAN-BRANCHING ENZYME"/>
    <property type="match status" value="1"/>
</dbReference>
<dbReference type="PANTHER" id="PTHR43651:SF3">
    <property type="entry name" value="1,4-ALPHA-GLUCAN-BRANCHING ENZYME"/>
    <property type="match status" value="1"/>
</dbReference>
<dbReference type="Pfam" id="PF00128">
    <property type="entry name" value="Alpha-amylase"/>
    <property type="match status" value="2"/>
</dbReference>
<dbReference type="Pfam" id="PF02806">
    <property type="entry name" value="Alpha-amylase_C"/>
    <property type="match status" value="1"/>
</dbReference>
<dbReference type="Pfam" id="PF02922">
    <property type="entry name" value="CBM_48"/>
    <property type="match status" value="1"/>
</dbReference>
<dbReference type="Pfam" id="PF22019">
    <property type="entry name" value="GlgB_N"/>
    <property type="match status" value="1"/>
</dbReference>
<dbReference type="PIRSF" id="PIRSF000463">
    <property type="entry name" value="GlgB"/>
    <property type="match status" value="1"/>
</dbReference>
<dbReference type="SMART" id="SM00642">
    <property type="entry name" value="Aamy"/>
    <property type="match status" value="1"/>
</dbReference>
<dbReference type="SUPFAM" id="SSF51445">
    <property type="entry name" value="(Trans)glycosidases"/>
    <property type="match status" value="1"/>
</dbReference>
<dbReference type="SUPFAM" id="SSF81296">
    <property type="entry name" value="E set domains"/>
    <property type="match status" value="2"/>
</dbReference>
<dbReference type="SUPFAM" id="SSF51011">
    <property type="entry name" value="Glycosyl hydrolase domain"/>
    <property type="match status" value="1"/>
</dbReference>
<comment type="function">
    <text evidence="1">Catalyzes the formation of the alpha-1,6-glucosidic linkages in glycogen by scission of a 1,4-alpha-linked oligosaccharide from growing alpha-1,4-glucan chains and the subsequent attachment of the oligosaccharide to the alpha-1,6 position.</text>
</comment>
<comment type="catalytic activity">
    <reaction evidence="1">
        <text>Transfers a segment of a (1-&gt;4)-alpha-D-glucan chain to a primary hydroxy group in a similar glucan chain.</text>
        <dbReference type="EC" id="2.4.1.18"/>
    </reaction>
</comment>
<comment type="pathway">
    <text evidence="1">Glycan biosynthesis; glycogen biosynthesis.</text>
</comment>
<comment type="subunit">
    <text evidence="1">Monomer.</text>
</comment>
<comment type="similarity">
    <text evidence="1">Belongs to the glycosyl hydrolase 13 family. GlgB subfamily.</text>
</comment>
<keyword id="KW-0119">Carbohydrate metabolism</keyword>
<keyword id="KW-0320">Glycogen biosynthesis</keyword>
<keyword id="KW-0321">Glycogen metabolism</keyword>
<keyword id="KW-0328">Glycosyltransferase</keyword>
<keyword id="KW-1185">Reference proteome</keyword>
<keyword id="KW-0808">Transferase</keyword>
<evidence type="ECO:0000255" key="1">
    <source>
        <dbReference type="HAMAP-Rule" id="MF_00685"/>
    </source>
</evidence>
<gene>
    <name evidence="1" type="primary">glgB</name>
    <name type="ordered locus">Sfri_2165</name>
</gene>